<dbReference type="EMBL" id="AF249278">
    <property type="protein sequence ID" value="AAF91335.1"/>
    <property type="molecule type" value="mRNA"/>
</dbReference>
<dbReference type="EMBL" id="AL445569">
    <property type="status" value="NOT_ANNOTATED_CDS"/>
    <property type="molecule type" value="Genomic_DNA"/>
</dbReference>
<dbReference type="EMBL" id="AL049845">
    <property type="status" value="NOT_ANNOTATED_CDS"/>
    <property type="molecule type" value="Genomic_DNA"/>
</dbReference>
<dbReference type="EMBL" id="AL360232">
    <property type="status" value="NOT_ANNOTATED_CDS"/>
    <property type="molecule type" value="Genomic_DNA"/>
</dbReference>
<dbReference type="EMBL" id="AL360236">
    <property type="status" value="NOT_ANNOTATED_CDS"/>
    <property type="molecule type" value="Genomic_DNA"/>
</dbReference>
<dbReference type="EMBL" id="AL365232">
    <property type="status" value="NOT_ANNOTATED_CDS"/>
    <property type="molecule type" value="Genomic_DNA"/>
</dbReference>
<dbReference type="EMBL" id="FO393414">
    <property type="status" value="NOT_ANNOTATED_CDS"/>
    <property type="molecule type" value="Genomic_DNA"/>
</dbReference>
<dbReference type="EMBL" id="AL513522">
    <property type="status" value="NOT_ANNOTATED_CDS"/>
    <property type="molecule type" value="Genomic_DNA"/>
</dbReference>
<dbReference type="EMBL" id="AL671823">
    <property type="status" value="NOT_ANNOTATED_CDS"/>
    <property type="molecule type" value="Genomic_DNA"/>
</dbReference>
<dbReference type="EMBL" id="BC050689">
    <property type="protein sequence ID" value="AAH50689.1"/>
    <property type="molecule type" value="mRNA"/>
</dbReference>
<dbReference type="EMBL" id="BC117359">
    <property type="protein sequence ID" value="AAI17360.1"/>
    <property type="molecule type" value="mRNA"/>
</dbReference>
<dbReference type="EMBL" id="BC143554">
    <property type="protein sequence ID" value="AAI43555.1"/>
    <property type="molecule type" value="mRNA"/>
</dbReference>
<dbReference type="EMBL" id="AK299550">
    <property type="protein sequence ID" value="BAG61495.1"/>
    <property type="status" value="ALT_INIT"/>
    <property type="molecule type" value="mRNA"/>
</dbReference>
<dbReference type="EMBL" id="AF202977">
    <property type="protein sequence ID" value="AAF69797.1"/>
    <property type="molecule type" value="mRNA"/>
</dbReference>
<dbReference type="EMBL" id="AJ272506">
    <property type="protein sequence ID" value="CAC88112.1"/>
    <property type="molecule type" value="Genomic_DNA"/>
</dbReference>
<dbReference type="EMBL" id="AJ272507">
    <property type="protein sequence ID" value="CAC88112.1"/>
    <property type="status" value="JOINED"/>
    <property type="molecule type" value="Genomic_DNA"/>
</dbReference>
<dbReference type="EMBL" id="AJ272508">
    <property type="protein sequence ID" value="CAC88112.1"/>
    <property type="status" value="JOINED"/>
    <property type="molecule type" value="Genomic_DNA"/>
</dbReference>
<dbReference type="EMBL" id="AJ272509">
    <property type="protein sequence ID" value="CAC88112.1"/>
    <property type="status" value="JOINED"/>
    <property type="molecule type" value="Genomic_DNA"/>
</dbReference>
<dbReference type="EMBL" id="AJ272510">
    <property type="protein sequence ID" value="CAC88112.1"/>
    <property type="status" value="JOINED"/>
    <property type="molecule type" value="Genomic_DNA"/>
</dbReference>
<dbReference type="EMBL" id="AJ272511">
    <property type="protein sequence ID" value="CAC88112.1"/>
    <property type="status" value="JOINED"/>
    <property type="molecule type" value="Genomic_DNA"/>
</dbReference>
<dbReference type="EMBL" id="AJ272512">
    <property type="protein sequence ID" value="CAC88112.1"/>
    <property type="status" value="JOINED"/>
    <property type="molecule type" value="Genomic_DNA"/>
</dbReference>
<dbReference type="EMBL" id="AJ272513">
    <property type="protein sequence ID" value="CAC88112.1"/>
    <property type="status" value="JOINED"/>
    <property type="molecule type" value="Genomic_DNA"/>
</dbReference>
<dbReference type="EMBL" id="AJ272514">
    <property type="protein sequence ID" value="CAC88112.1"/>
    <property type="status" value="JOINED"/>
    <property type="molecule type" value="Genomic_DNA"/>
</dbReference>
<dbReference type="EMBL" id="AJ272515">
    <property type="protein sequence ID" value="CAC88112.1"/>
    <property type="status" value="JOINED"/>
    <property type="molecule type" value="Genomic_DNA"/>
</dbReference>
<dbReference type="EMBL" id="AJ272516">
    <property type="protein sequence ID" value="CAC88112.1"/>
    <property type="status" value="JOINED"/>
    <property type="molecule type" value="Genomic_DNA"/>
</dbReference>
<dbReference type="EMBL" id="AJ272517">
    <property type="protein sequence ID" value="CAC88112.1"/>
    <property type="status" value="JOINED"/>
    <property type="molecule type" value="Genomic_DNA"/>
</dbReference>
<dbReference type="EMBL" id="AJ272518">
    <property type="protein sequence ID" value="CAC88112.1"/>
    <property type="status" value="JOINED"/>
    <property type="molecule type" value="Genomic_DNA"/>
</dbReference>
<dbReference type="EMBL" id="AJ272519">
    <property type="protein sequence ID" value="CAC88112.1"/>
    <property type="status" value="JOINED"/>
    <property type="molecule type" value="Genomic_DNA"/>
</dbReference>
<dbReference type="EMBL" id="AF263835">
    <property type="protein sequence ID" value="AAF73446.1"/>
    <property type="molecule type" value="mRNA"/>
</dbReference>
<dbReference type="CCDS" id="CCDS4976.1">
    <molecule id="Q9NR82-1"/>
</dbReference>
<dbReference type="CCDS" id="CCDS55034.1">
    <molecule id="Q9NR82-6"/>
</dbReference>
<dbReference type="CCDS" id="CCDS55035.1">
    <molecule id="Q9NR82-5"/>
</dbReference>
<dbReference type="CCDS" id="CCDS55037.1">
    <molecule id="Q9NR82-2"/>
</dbReference>
<dbReference type="RefSeq" id="NP_001153602.1">
    <molecule id="Q9NR82-2"/>
    <property type="nucleotide sequence ID" value="NM_001160130.2"/>
</dbReference>
<dbReference type="RefSeq" id="NP_001153604.1">
    <molecule id="Q9NR82-3"/>
    <property type="nucleotide sequence ID" value="NM_001160132.2"/>
</dbReference>
<dbReference type="RefSeq" id="NP_001153605.1">
    <molecule id="Q9NR82-6"/>
    <property type="nucleotide sequence ID" value="NM_001160133.2"/>
</dbReference>
<dbReference type="RefSeq" id="NP_001153606.1">
    <molecule id="Q9NR82-5"/>
    <property type="nucleotide sequence ID" value="NM_001160134.2"/>
</dbReference>
<dbReference type="RefSeq" id="NP_062816.2">
    <molecule id="Q9NR82-1"/>
    <property type="nucleotide sequence ID" value="NM_019842.3"/>
</dbReference>
<dbReference type="PDB" id="6B8Q">
    <property type="method" value="X-ray"/>
    <property type="resolution" value="2.60 A"/>
    <property type="chains" value="A/C/E/G=361-394, A/C/E/G=512-545"/>
</dbReference>
<dbReference type="PDBsum" id="6B8Q"/>
<dbReference type="SMR" id="Q9NR82"/>
<dbReference type="BioGRID" id="121149">
    <property type="interactions" value="33"/>
</dbReference>
<dbReference type="CORUM" id="Q9NR82"/>
<dbReference type="FunCoup" id="Q9NR82">
    <property type="interactions" value="319"/>
</dbReference>
<dbReference type="IntAct" id="Q9NR82">
    <property type="interactions" value="19"/>
</dbReference>
<dbReference type="STRING" id="9606.ENSP00000345055"/>
<dbReference type="BindingDB" id="Q9NR82"/>
<dbReference type="ChEMBL" id="CHEMBL2925"/>
<dbReference type="DrugBank" id="DB00228">
    <property type="generic name" value="Enflurane"/>
</dbReference>
<dbReference type="DrugBank" id="DB04953">
    <property type="generic name" value="Ezogabine"/>
</dbReference>
<dbReference type="DrugBank" id="DB00996">
    <property type="generic name" value="Gabapentin"/>
</dbReference>
<dbReference type="DrugBank" id="DB06089">
    <property type="generic name" value="ICA-105665"/>
</dbReference>
<dbReference type="DrugBank" id="DB01110">
    <property type="generic name" value="Miconazole"/>
</dbReference>
<dbReference type="DrugBank" id="DB01069">
    <property type="generic name" value="Promethazine"/>
</dbReference>
<dbReference type="DrugCentral" id="Q9NR82"/>
<dbReference type="GuidetoPHARMACOLOGY" id="564"/>
<dbReference type="GlyGen" id="Q9NR82">
    <property type="glycosylation" value="1 site, 1 O-linked glycan (1 site)"/>
</dbReference>
<dbReference type="iPTMnet" id="Q9NR82"/>
<dbReference type="PhosphoSitePlus" id="Q9NR82"/>
<dbReference type="BioMuta" id="KCNQ5"/>
<dbReference type="DMDM" id="122065285"/>
<dbReference type="jPOST" id="Q9NR82"/>
<dbReference type="MassIVE" id="Q9NR82"/>
<dbReference type="PaxDb" id="9606-ENSP00000345055"/>
<dbReference type="PeptideAtlas" id="Q9NR82"/>
<dbReference type="ProteomicsDB" id="1710"/>
<dbReference type="ProteomicsDB" id="1972"/>
<dbReference type="ProteomicsDB" id="25137"/>
<dbReference type="ProteomicsDB" id="82300">
    <molecule id="Q9NR82-1"/>
</dbReference>
<dbReference type="ProteomicsDB" id="82301">
    <molecule id="Q9NR82-2"/>
</dbReference>
<dbReference type="ProteomicsDB" id="82302">
    <molecule id="Q9NR82-3"/>
</dbReference>
<dbReference type="ProteomicsDB" id="82303">
    <molecule id="Q9NR82-4"/>
</dbReference>
<dbReference type="Antibodypedia" id="17775">
    <property type="antibodies" value="244 antibodies from 31 providers"/>
</dbReference>
<dbReference type="DNASU" id="56479"/>
<dbReference type="Ensembl" id="ENST00000342056.6">
    <molecule id="Q9NR82-6"/>
    <property type="protein sequence ID" value="ENSP00000345055.2"/>
    <property type="gene ID" value="ENSG00000185760.18"/>
</dbReference>
<dbReference type="Ensembl" id="ENST00000370392.5">
    <molecule id="Q9NR82-4"/>
    <property type="protein sequence ID" value="ENSP00000359419.1"/>
    <property type="gene ID" value="ENSG00000185760.18"/>
</dbReference>
<dbReference type="Ensembl" id="ENST00000370398.6">
    <molecule id="Q9NR82-1"/>
    <property type="protein sequence ID" value="ENSP00000359425.1"/>
    <property type="gene ID" value="ENSG00000185760.18"/>
</dbReference>
<dbReference type="Ensembl" id="ENST00000628967.2">
    <molecule id="Q9NR82-5"/>
    <property type="protein sequence ID" value="ENSP00000486187.1"/>
    <property type="gene ID" value="ENSG00000185760.18"/>
</dbReference>
<dbReference type="Ensembl" id="ENST00000629977.2">
    <molecule id="Q9NR82-2"/>
    <property type="protein sequence ID" value="ENSP00000485743.1"/>
    <property type="gene ID" value="ENSG00000185760.18"/>
</dbReference>
<dbReference type="GeneID" id="56479"/>
<dbReference type="KEGG" id="hsa:56479"/>
<dbReference type="MANE-Select" id="ENST00000370398.6">
    <property type="protein sequence ID" value="ENSP00000359425.1"/>
    <property type="RefSeq nucleotide sequence ID" value="NM_019842.4"/>
    <property type="RefSeq protein sequence ID" value="NP_062816.2"/>
</dbReference>
<dbReference type="UCSC" id="uc003pgj.5">
    <molecule id="Q9NR82-1"/>
    <property type="organism name" value="human"/>
</dbReference>
<dbReference type="AGR" id="HGNC:6299"/>
<dbReference type="CTD" id="56479"/>
<dbReference type="DisGeNET" id="56479"/>
<dbReference type="GeneCards" id="KCNQ5"/>
<dbReference type="HGNC" id="HGNC:6299">
    <property type="gene designation" value="KCNQ5"/>
</dbReference>
<dbReference type="HPA" id="ENSG00000185760">
    <property type="expression patterns" value="Tissue enhanced (brain, skeletal muscle, tongue)"/>
</dbReference>
<dbReference type="MalaCards" id="KCNQ5"/>
<dbReference type="MIM" id="607357">
    <property type="type" value="gene"/>
</dbReference>
<dbReference type="MIM" id="617601">
    <property type="type" value="phenotype"/>
</dbReference>
<dbReference type="neXtProt" id="NX_Q9NR82"/>
<dbReference type="OpenTargets" id="ENSG00000185760"/>
<dbReference type="Orphanet" id="178469">
    <property type="disease" value="Autosomal dominant non-syndromic intellectual disability"/>
</dbReference>
<dbReference type="PharmGKB" id="PA30077"/>
<dbReference type="VEuPathDB" id="HostDB:ENSG00000185760"/>
<dbReference type="eggNOG" id="KOG1419">
    <property type="taxonomic scope" value="Eukaryota"/>
</dbReference>
<dbReference type="GeneTree" id="ENSGT00940000155933"/>
<dbReference type="HOGENOM" id="CLU_673604_0_0_1"/>
<dbReference type="InParanoid" id="Q9NR82"/>
<dbReference type="OrthoDB" id="9527039at2759"/>
<dbReference type="PAN-GO" id="Q9NR82">
    <property type="GO annotations" value="5 GO annotations based on evolutionary models"/>
</dbReference>
<dbReference type="PhylomeDB" id="Q9NR82"/>
<dbReference type="TreeFam" id="TF315186"/>
<dbReference type="PathwayCommons" id="Q9NR82"/>
<dbReference type="Reactome" id="R-HSA-1296072">
    <property type="pathway name" value="Voltage gated Potassium channels"/>
</dbReference>
<dbReference type="SignaLink" id="Q9NR82"/>
<dbReference type="SIGNOR" id="Q9NR82"/>
<dbReference type="BioGRID-ORCS" id="56479">
    <property type="hits" value="20 hits in 1145 CRISPR screens"/>
</dbReference>
<dbReference type="ChiTaRS" id="KCNQ5">
    <property type="organism name" value="human"/>
</dbReference>
<dbReference type="GeneWiki" id="KCNQ5"/>
<dbReference type="GenomeRNAi" id="56479"/>
<dbReference type="Pharos" id="Q9NR82">
    <property type="development level" value="Tclin"/>
</dbReference>
<dbReference type="PRO" id="PR:Q9NR82"/>
<dbReference type="Proteomes" id="UP000005640">
    <property type="component" value="Chromosome 6"/>
</dbReference>
<dbReference type="RNAct" id="Q9NR82">
    <property type="molecule type" value="protein"/>
</dbReference>
<dbReference type="Bgee" id="ENSG00000185760">
    <property type="expression patterns" value="Expressed in endothelial cell and 131 other cell types or tissues"/>
</dbReference>
<dbReference type="ExpressionAtlas" id="Q9NR82">
    <property type="expression patterns" value="baseline and differential"/>
</dbReference>
<dbReference type="GO" id="GO:0044305">
    <property type="term" value="C:calyx of Held"/>
    <property type="evidence" value="ECO:0007669"/>
    <property type="project" value="Ensembl"/>
</dbReference>
<dbReference type="GO" id="GO:0030118">
    <property type="term" value="C:clathrin coat"/>
    <property type="evidence" value="ECO:0000314"/>
    <property type="project" value="UniProtKB"/>
</dbReference>
<dbReference type="GO" id="GO:0005886">
    <property type="term" value="C:plasma membrane"/>
    <property type="evidence" value="ECO:0000314"/>
    <property type="project" value="UniProtKB"/>
</dbReference>
<dbReference type="GO" id="GO:0042734">
    <property type="term" value="C:presynaptic membrane"/>
    <property type="evidence" value="ECO:0007669"/>
    <property type="project" value="Ensembl"/>
</dbReference>
<dbReference type="GO" id="GO:0008076">
    <property type="term" value="C:voltage-gated potassium channel complex"/>
    <property type="evidence" value="ECO:0000314"/>
    <property type="project" value="UniProtKB"/>
</dbReference>
<dbReference type="GO" id="GO:0099508">
    <property type="term" value="F:voltage-gated monoatomic ion channel activity involved in regulation of presynaptic membrane potential"/>
    <property type="evidence" value="ECO:0007669"/>
    <property type="project" value="Ensembl"/>
</dbReference>
<dbReference type="GO" id="GO:0005249">
    <property type="term" value="F:voltage-gated potassium channel activity"/>
    <property type="evidence" value="ECO:0000314"/>
    <property type="project" value="UniProtKB"/>
</dbReference>
<dbReference type="GO" id="GO:0071805">
    <property type="term" value="P:potassium ion transmembrane transport"/>
    <property type="evidence" value="ECO:0000314"/>
    <property type="project" value="UniProtKB"/>
</dbReference>
<dbReference type="FunFam" id="1.20.120.350:FF:000017">
    <property type="entry name" value="potassium voltage-gated channel subfamily KQT member 1"/>
    <property type="match status" value="1"/>
</dbReference>
<dbReference type="FunFam" id="1.10.287.70:FF:000016">
    <property type="entry name" value="Putative potassium voltage-gated channel subfamily KQT member 2"/>
    <property type="match status" value="1"/>
</dbReference>
<dbReference type="Gene3D" id="1.10.287.70">
    <property type="match status" value="1"/>
</dbReference>
<dbReference type="Gene3D" id="6.10.140.1910">
    <property type="match status" value="2"/>
</dbReference>
<dbReference type="InterPro" id="IPR005821">
    <property type="entry name" value="Ion_trans_dom"/>
</dbReference>
<dbReference type="InterPro" id="IPR003937">
    <property type="entry name" value="K_chnl_volt-dep_KCNQ"/>
</dbReference>
<dbReference type="InterPro" id="IPR013821">
    <property type="entry name" value="K_chnl_volt-dep_KCNQ_C"/>
</dbReference>
<dbReference type="PANTHER" id="PTHR47735">
    <property type="entry name" value="POTASSIUM VOLTAGE-GATED CHANNEL SUBFAMILY KQT MEMBER 4"/>
    <property type="match status" value="1"/>
</dbReference>
<dbReference type="PANTHER" id="PTHR47735:SF8">
    <property type="entry name" value="POTASSIUM VOLTAGE-GATED CHANNEL SUBFAMILY KQT MEMBER 5"/>
    <property type="match status" value="1"/>
</dbReference>
<dbReference type="Pfam" id="PF00520">
    <property type="entry name" value="Ion_trans"/>
    <property type="match status" value="1"/>
</dbReference>
<dbReference type="Pfam" id="PF03520">
    <property type="entry name" value="KCNQ_channel"/>
    <property type="match status" value="1"/>
</dbReference>
<dbReference type="PRINTS" id="PR00169">
    <property type="entry name" value="KCHANNEL"/>
</dbReference>
<dbReference type="PRINTS" id="PR01459">
    <property type="entry name" value="KCNQCHANNEL"/>
</dbReference>
<dbReference type="SUPFAM" id="SSF81324">
    <property type="entry name" value="Voltage-gated potassium channels"/>
    <property type="match status" value="1"/>
</dbReference>
<organism>
    <name type="scientific">Homo sapiens</name>
    <name type="common">Human</name>
    <dbReference type="NCBI Taxonomy" id="9606"/>
    <lineage>
        <taxon>Eukaryota</taxon>
        <taxon>Metazoa</taxon>
        <taxon>Chordata</taxon>
        <taxon>Craniata</taxon>
        <taxon>Vertebrata</taxon>
        <taxon>Euteleostomi</taxon>
        <taxon>Mammalia</taxon>
        <taxon>Eutheria</taxon>
        <taxon>Euarchontoglires</taxon>
        <taxon>Primates</taxon>
        <taxon>Haplorrhini</taxon>
        <taxon>Catarrhini</taxon>
        <taxon>Hominidae</taxon>
        <taxon>Homo</taxon>
    </lineage>
</organism>
<sequence>MPRHHAGGEEGGAAGLWVKSGAAAAAAGGGRLGSGMKDVESGRGRVLLNSAAARGDGLLLLGTRAATLGGGGGGLRESRRGKQGARMSLLGKPLSYTSSQSCRRNVKYRRVQNYLYNVLERPRGWAFIYHAFVFLLVFGCLILSVFSTIPEHTKLASSCLLILEFVMIVVFGLEFIIRIWSAGCCCRYRGWQGRLRFARKPFCVIDTIVLIASIAVVSAKTQGNIFATSALRSLRFLQILRMVRMDRRGGTWKLLGSVVYAHSKELITAWYIGFLVLIFSSFLVYLVEKDANKEFSTYADALWWGTITLTTIGYGDKTPLTWLGRLLSAGFALLGISFFALPAGILGSGFALKVQEQHRQKHFEKRRNPAANLIQCVWRSYAADEKSVSIATWKPHLKALHTCSPTKKEQGEASSSQKLSFKERVRMASPRGQSIKSRQASVGDRRSPSTDITAEGSPTKVQKSWSFNDRTRFRPSLRLKSSQPKPVIDADTALGTDDVYDEKGCQCDVSVEDLTPPLKTVIRAIRIMKFHVAKRKFKETLRPYDVKDVIEQYSAGHLDMLCRIKSLQTRVDQILGKGQITSDKKSREKITAEHETTDDLSMLGRVVKVEKQVQSIESKLDCLLDIYQQVLRKGSASALALASFQIPPFECEQTSDYQSPVDSKDLSGSAQNSGCLSRSTSANISRGLQFILTPNEFSAQTFYALSPTMHSQATQVPISQSDGSAVAATNTIANQINTAPKPAAPTTLQIPPPLPAIKHLPRPETLHPNPAGLQESISDVTTCLVASKENVQVAQSNLTKDRSMRKSFDMGGETLLSVCPMVPKDLGKSLSVQNLIRSTEELNIQLSGSESSGSRGSQDFYPKWRESKLFITDEEVGPEETETDTFDAAPQPAREAAFASDSLRTGRSRSSQSICKAGESTDALSLPHVKLK</sequence>
<reference key="1">
    <citation type="journal article" date="2000" name="J. Biol. Chem.">
        <title>Molecular cloning and functional expression of KCNQ5, a potassium channel subunit that may contribute to neuronal M-current diversity.</title>
        <authorList>
            <person name="Lerche C."/>
            <person name="Scherer C.R."/>
            <person name="Seebohm G."/>
            <person name="Derst C."/>
            <person name="Wei A.D."/>
            <person name="Busch A.E."/>
            <person name="Steinmeyer K."/>
        </authorList>
    </citation>
    <scope>NUCLEOTIDE SEQUENCE [MRNA] (ISOFORM 1)</scope>
    <scope>FUNCTION</scope>
    <scope>TRANSPORTER ACTIVITY</scope>
    <scope>SUBUNIT</scope>
    <scope>SUBCELLULAR LOCATION</scope>
    <scope>ACTIVITY REGULATION</scope>
    <scope>TISSUE SPECIFICITY</scope>
    <source>
        <tissue>Brain</tissue>
    </source>
</reference>
<reference key="2">
    <citation type="journal article" date="2003" name="Nature">
        <title>The DNA sequence and analysis of human chromosome 6.</title>
        <authorList>
            <person name="Mungall A.J."/>
            <person name="Palmer S.A."/>
            <person name="Sims S.K."/>
            <person name="Edwards C.A."/>
            <person name="Ashurst J.L."/>
            <person name="Wilming L."/>
            <person name="Jones M.C."/>
            <person name="Horton R."/>
            <person name="Hunt S.E."/>
            <person name="Scott C.E."/>
            <person name="Gilbert J.G.R."/>
            <person name="Clamp M.E."/>
            <person name="Bethel G."/>
            <person name="Milne S."/>
            <person name="Ainscough R."/>
            <person name="Almeida J.P."/>
            <person name="Ambrose K.D."/>
            <person name="Andrews T.D."/>
            <person name="Ashwell R.I.S."/>
            <person name="Babbage A.K."/>
            <person name="Bagguley C.L."/>
            <person name="Bailey J."/>
            <person name="Banerjee R."/>
            <person name="Barker D.J."/>
            <person name="Barlow K.F."/>
            <person name="Bates K."/>
            <person name="Beare D.M."/>
            <person name="Beasley H."/>
            <person name="Beasley O."/>
            <person name="Bird C.P."/>
            <person name="Blakey S.E."/>
            <person name="Bray-Allen S."/>
            <person name="Brook J."/>
            <person name="Brown A.J."/>
            <person name="Brown J.Y."/>
            <person name="Burford D.C."/>
            <person name="Burrill W."/>
            <person name="Burton J."/>
            <person name="Carder C."/>
            <person name="Carter N.P."/>
            <person name="Chapman J.C."/>
            <person name="Clark S.Y."/>
            <person name="Clark G."/>
            <person name="Clee C.M."/>
            <person name="Clegg S."/>
            <person name="Cobley V."/>
            <person name="Collier R.E."/>
            <person name="Collins J.E."/>
            <person name="Colman L.K."/>
            <person name="Corby N.R."/>
            <person name="Coville G.J."/>
            <person name="Culley K.M."/>
            <person name="Dhami P."/>
            <person name="Davies J."/>
            <person name="Dunn M."/>
            <person name="Earthrowl M.E."/>
            <person name="Ellington A.E."/>
            <person name="Evans K.A."/>
            <person name="Faulkner L."/>
            <person name="Francis M.D."/>
            <person name="Frankish A."/>
            <person name="Frankland J."/>
            <person name="French L."/>
            <person name="Garner P."/>
            <person name="Garnett J."/>
            <person name="Ghori M.J."/>
            <person name="Gilby L.M."/>
            <person name="Gillson C.J."/>
            <person name="Glithero R.J."/>
            <person name="Grafham D.V."/>
            <person name="Grant M."/>
            <person name="Gribble S."/>
            <person name="Griffiths C."/>
            <person name="Griffiths M.N.D."/>
            <person name="Hall R."/>
            <person name="Halls K.S."/>
            <person name="Hammond S."/>
            <person name="Harley J.L."/>
            <person name="Hart E.A."/>
            <person name="Heath P.D."/>
            <person name="Heathcott R."/>
            <person name="Holmes S.J."/>
            <person name="Howden P.J."/>
            <person name="Howe K.L."/>
            <person name="Howell G.R."/>
            <person name="Huckle E."/>
            <person name="Humphray S.J."/>
            <person name="Humphries M.D."/>
            <person name="Hunt A.R."/>
            <person name="Johnson C.M."/>
            <person name="Joy A.A."/>
            <person name="Kay M."/>
            <person name="Keenan S.J."/>
            <person name="Kimberley A.M."/>
            <person name="King A."/>
            <person name="Laird G.K."/>
            <person name="Langford C."/>
            <person name="Lawlor S."/>
            <person name="Leongamornlert D.A."/>
            <person name="Leversha M."/>
            <person name="Lloyd C.R."/>
            <person name="Lloyd D.M."/>
            <person name="Loveland J.E."/>
            <person name="Lovell J."/>
            <person name="Martin S."/>
            <person name="Mashreghi-Mohammadi M."/>
            <person name="Maslen G.L."/>
            <person name="Matthews L."/>
            <person name="McCann O.T."/>
            <person name="McLaren S.J."/>
            <person name="McLay K."/>
            <person name="McMurray A."/>
            <person name="Moore M.J.F."/>
            <person name="Mullikin J.C."/>
            <person name="Niblett D."/>
            <person name="Nickerson T."/>
            <person name="Novik K.L."/>
            <person name="Oliver K."/>
            <person name="Overton-Larty E.K."/>
            <person name="Parker A."/>
            <person name="Patel R."/>
            <person name="Pearce A.V."/>
            <person name="Peck A.I."/>
            <person name="Phillimore B.J.C.T."/>
            <person name="Phillips S."/>
            <person name="Plumb R.W."/>
            <person name="Porter K.M."/>
            <person name="Ramsey Y."/>
            <person name="Ranby S.A."/>
            <person name="Rice C.M."/>
            <person name="Ross M.T."/>
            <person name="Searle S.M."/>
            <person name="Sehra H.K."/>
            <person name="Sheridan E."/>
            <person name="Skuce C.D."/>
            <person name="Smith S."/>
            <person name="Smith M."/>
            <person name="Spraggon L."/>
            <person name="Squares S.L."/>
            <person name="Steward C.A."/>
            <person name="Sycamore N."/>
            <person name="Tamlyn-Hall G."/>
            <person name="Tester J."/>
            <person name="Theaker A.J."/>
            <person name="Thomas D.W."/>
            <person name="Thorpe A."/>
            <person name="Tracey A."/>
            <person name="Tromans A."/>
            <person name="Tubby B."/>
            <person name="Wall M."/>
            <person name="Wallis J.M."/>
            <person name="West A.P."/>
            <person name="White S.S."/>
            <person name="Whitehead S.L."/>
            <person name="Whittaker H."/>
            <person name="Wild A."/>
            <person name="Willey D.J."/>
            <person name="Wilmer T.E."/>
            <person name="Wood J.M."/>
            <person name="Wray P.W."/>
            <person name="Wyatt J.C."/>
            <person name="Young L."/>
            <person name="Younger R.M."/>
            <person name="Bentley D.R."/>
            <person name="Coulson A."/>
            <person name="Durbin R.M."/>
            <person name="Hubbard T."/>
            <person name="Sulston J.E."/>
            <person name="Dunham I."/>
            <person name="Rogers J."/>
            <person name="Beck S."/>
        </authorList>
    </citation>
    <scope>NUCLEOTIDE SEQUENCE [LARGE SCALE GENOMIC DNA]</scope>
</reference>
<reference key="3">
    <citation type="journal article" date="2004" name="Genome Res.">
        <title>The status, quality, and expansion of the NIH full-length cDNA project: the Mammalian Gene Collection (MGC).</title>
        <authorList>
            <consortium name="The MGC Project Team"/>
        </authorList>
    </citation>
    <scope>NUCLEOTIDE SEQUENCE [LARGE SCALE MRNA] (ISOFORMS 2 AND 4)</scope>
    <source>
        <tissue>Placenta</tissue>
    </source>
</reference>
<reference key="4">
    <citation type="journal article" date="2004" name="Nat. Genet.">
        <title>Complete sequencing and characterization of 21,243 full-length human cDNAs.</title>
        <authorList>
            <person name="Ota T."/>
            <person name="Suzuki Y."/>
            <person name="Nishikawa T."/>
            <person name="Otsuki T."/>
            <person name="Sugiyama T."/>
            <person name="Irie R."/>
            <person name="Wakamatsu A."/>
            <person name="Hayashi K."/>
            <person name="Sato H."/>
            <person name="Nagai K."/>
            <person name="Kimura K."/>
            <person name="Makita H."/>
            <person name="Sekine M."/>
            <person name="Obayashi M."/>
            <person name="Nishi T."/>
            <person name="Shibahara T."/>
            <person name="Tanaka T."/>
            <person name="Ishii S."/>
            <person name="Yamamoto J."/>
            <person name="Saito K."/>
            <person name="Kawai Y."/>
            <person name="Isono Y."/>
            <person name="Nakamura Y."/>
            <person name="Nagahari K."/>
            <person name="Murakami K."/>
            <person name="Yasuda T."/>
            <person name="Iwayanagi T."/>
            <person name="Wagatsuma M."/>
            <person name="Shiratori A."/>
            <person name="Sudo H."/>
            <person name="Hosoiri T."/>
            <person name="Kaku Y."/>
            <person name="Kodaira H."/>
            <person name="Kondo H."/>
            <person name="Sugawara M."/>
            <person name="Takahashi M."/>
            <person name="Kanda K."/>
            <person name="Yokoi T."/>
            <person name="Furuya T."/>
            <person name="Kikkawa E."/>
            <person name="Omura Y."/>
            <person name="Abe K."/>
            <person name="Kamihara K."/>
            <person name="Katsuta N."/>
            <person name="Sato K."/>
            <person name="Tanikawa M."/>
            <person name="Yamazaki M."/>
            <person name="Ninomiya K."/>
            <person name="Ishibashi T."/>
            <person name="Yamashita H."/>
            <person name="Murakawa K."/>
            <person name="Fujimori K."/>
            <person name="Tanai H."/>
            <person name="Kimata M."/>
            <person name="Watanabe M."/>
            <person name="Hiraoka S."/>
            <person name="Chiba Y."/>
            <person name="Ishida S."/>
            <person name="Ono Y."/>
            <person name="Takiguchi S."/>
            <person name="Watanabe S."/>
            <person name="Yosida M."/>
            <person name="Hotuta T."/>
            <person name="Kusano J."/>
            <person name="Kanehori K."/>
            <person name="Takahashi-Fujii A."/>
            <person name="Hara H."/>
            <person name="Tanase T.-O."/>
            <person name="Nomura Y."/>
            <person name="Togiya S."/>
            <person name="Komai F."/>
            <person name="Hara R."/>
            <person name="Takeuchi K."/>
            <person name="Arita M."/>
            <person name="Imose N."/>
            <person name="Musashino K."/>
            <person name="Yuuki H."/>
            <person name="Oshima A."/>
            <person name="Sasaki N."/>
            <person name="Aotsuka S."/>
            <person name="Yoshikawa Y."/>
            <person name="Matsunawa H."/>
            <person name="Ichihara T."/>
            <person name="Shiohata N."/>
            <person name="Sano S."/>
            <person name="Moriya S."/>
            <person name="Momiyama H."/>
            <person name="Satoh N."/>
            <person name="Takami S."/>
            <person name="Terashima Y."/>
            <person name="Suzuki O."/>
            <person name="Nakagawa S."/>
            <person name="Senoh A."/>
            <person name="Mizoguchi H."/>
            <person name="Goto Y."/>
            <person name="Shimizu F."/>
            <person name="Wakebe H."/>
            <person name="Hishigaki H."/>
            <person name="Watanabe T."/>
            <person name="Sugiyama A."/>
            <person name="Takemoto M."/>
            <person name="Kawakami B."/>
            <person name="Yamazaki M."/>
            <person name="Watanabe K."/>
            <person name="Kumagai A."/>
            <person name="Itakura S."/>
            <person name="Fukuzumi Y."/>
            <person name="Fujimori Y."/>
            <person name="Komiyama M."/>
            <person name="Tashiro H."/>
            <person name="Tanigami A."/>
            <person name="Fujiwara T."/>
            <person name="Ono T."/>
            <person name="Yamada K."/>
            <person name="Fujii Y."/>
            <person name="Ozaki K."/>
            <person name="Hirao M."/>
            <person name="Ohmori Y."/>
            <person name="Kawabata A."/>
            <person name="Hikiji T."/>
            <person name="Kobatake N."/>
            <person name="Inagaki H."/>
            <person name="Ikema Y."/>
            <person name="Okamoto S."/>
            <person name="Okitani R."/>
            <person name="Kawakami T."/>
            <person name="Noguchi S."/>
            <person name="Itoh T."/>
            <person name="Shigeta K."/>
            <person name="Senba T."/>
            <person name="Matsumura K."/>
            <person name="Nakajima Y."/>
            <person name="Mizuno T."/>
            <person name="Morinaga M."/>
            <person name="Sasaki M."/>
            <person name="Togashi T."/>
            <person name="Oyama M."/>
            <person name="Hata H."/>
            <person name="Watanabe M."/>
            <person name="Komatsu T."/>
            <person name="Mizushima-Sugano J."/>
            <person name="Satoh T."/>
            <person name="Shirai Y."/>
            <person name="Takahashi Y."/>
            <person name="Nakagawa K."/>
            <person name="Okumura K."/>
            <person name="Nagase T."/>
            <person name="Nomura N."/>
            <person name="Kikuchi H."/>
            <person name="Masuho Y."/>
            <person name="Yamashita R."/>
            <person name="Nakai K."/>
            <person name="Yada T."/>
            <person name="Nakamura Y."/>
            <person name="Ohara O."/>
            <person name="Isogai T."/>
            <person name="Sugano S."/>
        </authorList>
    </citation>
    <scope>NUCLEOTIDE SEQUENCE [LARGE SCALE MRNA] OF 19-822 (ISOFORM 5)</scope>
    <source>
        <tissue>Brain</tissue>
    </source>
</reference>
<reference key="5">
    <citation type="journal article" date="2000" name="J. Biol. Chem.">
        <title>KCNQ5, a novel potassium channel broadly expressed in brain, mediates M-type currents.</title>
        <authorList>
            <person name="Schroeder B.C."/>
            <person name="Hechenberger M."/>
            <person name="Weinreich F."/>
            <person name="Kubisch C."/>
            <person name="Jentsch T.J."/>
        </authorList>
    </citation>
    <scope>NUCLEOTIDE SEQUENCE [MRNA] OF 36-932 (ISOFORMS 1; 2 AND 3)</scope>
    <scope>FUNCTION</scope>
    <scope>ACTIVITY REGULATION</scope>
    <scope>TISSUE SPECIFICITY</scope>
    <source>
        <tissue>Brain</tissue>
    </source>
</reference>
<reference key="6">
    <citation type="submission" date="2000-02" db="EMBL/GenBank/DDBJ databases">
        <title>The new voltage gated potassium channel KCNQ5 and early infantile convulsions.</title>
        <authorList>
            <person name="Kananura C."/>
            <person name="Biervert B."/>
            <person name="Hechenberger M."/>
            <person name="Engels H."/>
            <person name="Steinlein O.K."/>
        </authorList>
    </citation>
    <scope>NUCLEOTIDE SEQUENCE [GENOMIC DNA] OF 36-932</scope>
</reference>
<reference key="7">
    <citation type="submission" date="2000-05" db="EMBL/GenBank/DDBJ databases">
        <title>A new gene of the voltage-gated potassium channel KCNQ family, KCNQ5, is a candidate gene for retinal disorders.</title>
        <authorList>
            <person name="Kniazeva M."/>
            <person name="Han M."/>
        </authorList>
    </citation>
    <scope>NUCLEOTIDE SEQUENCE [MRNA] OF 72-932 (ISOFORM 1)</scope>
    <source>
        <tissue>Brain</tissue>
        <tissue>Retina</tissue>
    </source>
</reference>
<reference key="8">
    <citation type="journal article" date="2001" name="Br. J. Pharmacol.">
        <title>Characterization of KCNQ5/Q3 potassium channels expressed in mammalian cells.</title>
        <authorList>
            <person name="Wickenden A.D."/>
            <person name="Zou A."/>
            <person name="Wagoner P.K."/>
            <person name="Jegla T."/>
        </authorList>
    </citation>
    <scope>FUNCTION</scope>
    <scope>SUBUNIT</scope>
    <scope>SUBCELLULAR LOCATION</scope>
    <scope>ACTIVITY REGULATION</scope>
    <scope>ACTIVATION BY RETICABINE</scope>
</reference>
<reference key="9">
    <citation type="journal article" date="2013" name="J. Proteome Res.">
        <title>Toward a comprehensive characterization of a human cancer cell phosphoproteome.</title>
        <authorList>
            <person name="Zhou H."/>
            <person name="Di Palma S."/>
            <person name="Preisinger C."/>
            <person name="Peng M."/>
            <person name="Polat A.N."/>
            <person name="Heck A.J."/>
            <person name="Mohammed S."/>
        </authorList>
    </citation>
    <scope>PHOSPHORYLATION [LARGE SCALE ANALYSIS] AT SER-831</scope>
    <scope>IDENTIFICATION BY MASS SPECTROMETRY [LARGE SCALE ANALYSIS]</scope>
    <source>
        <tissue>Erythroleukemia</tissue>
    </source>
</reference>
<reference key="10">
    <citation type="journal article" date="2014" name="Arterioscler. Thromb. Vasc. Biol.">
        <title>Functional assembly of Kv7.1/Kv7.5 channels with emerging properties on vascular muscle physiology.</title>
        <authorList>
            <person name="Oliveras A."/>
            <person name="Roura-Ferrer M."/>
            <person name="Sole L."/>
            <person name="de la Cruz A."/>
            <person name="Prieto A."/>
            <person name="Etxebarria A."/>
            <person name="Manils J."/>
            <person name="Morales-Cano D."/>
            <person name="Condom E."/>
            <person name="Soler C."/>
            <person name="Cogolludo A."/>
            <person name="Valenzuela C."/>
            <person name="Villarroel A."/>
            <person name="Comes N."/>
            <person name="Felipe A."/>
        </authorList>
    </citation>
    <scope>FUNCTION</scope>
    <scope>INTERACTION WITH KCNQ1</scope>
</reference>
<reference key="11">
    <citation type="journal article" date="2018" name="Neuron">
        <title>A calmodulin C-lobe Ca(2+)-dependent switch governs Kv7 channel function.</title>
        <authorList>
            <person name="Chang A."/>
            <person name="Abderemane-Ali F."/>
            <person name="Hura G.L."/>
            <person name="Rossen N.D."/>
            <person name="Gate R.E."/>
            <person name="Minor D.L."/>
        </authorList>
    </citation>
    <scope>X-RAY CRYSTALLOGRAPHY (2.60 ANGSTROMS) OF 361-394 AND 512-545</scope>
    <scope>ACTIVITY REGULATION</scope>
    <scope>SUBUNIT</scope>
    <scope>INTERACTION WITH CALM1</scope>
</reference>
<reference key="12">
    <citation type="journal article" date="2006" name="Science">
        <title>The consensus coding sequences of human breast and colorectal cancers.</title>
        <authorList>
            <person name="Sjoeblom T."/>
            <person name="Jones S."/>
            <person name="Wood L.D."/>
            <person name="Parsons D.W."/>
            <person name="Lin J."/>
            <person name="Barber T.D."/>
            <person name="Mandelker D."/>
            <person name="Leary R.J."/>
            <person name="Ptak J."/>
            <person name="Silliman N."/>
            <person name="Szabo S."/>
            <person name="Buckhaults P."/>
            <person name="Farrell C."/>
            <person name="Meeh P."/>
            <person name="Markowitz S.D."/>
            <person name="Willis J."/>
            <person name="Dawson D."/>
            <person name="Willson J.K.V."/>
            <person name="Gazdar A.F."/>
            <person name="Hartigan J."/>
            <person name="Wu L."/>
            <person name="Liu C."/>
            <person name="Parmigiani G."/>
            <person name="Park B.H."/>
            <person name="Bachman K.E."/>
            <person name="Papadopoulos N."/>
            <person name="Vogelstein B."/>
            <person name="Kinzler K.W."/>
            <person name="Velculescu V.E."/>
        </authorList>
    </citation>
    <scope>VARIANTS [LARGE SCALE ANALYSIS] GLY-191 AND CYS-244</scope>
</reference>
<reference key="13">
    <citation type="journal article" date="2017" name="Am. J. Hum. Genet.">
        <title>Loss-of-function and gain-of-function mutations in KCNQ5 cause intellectual disability or epileptic encephalopathy.</title>
        <authorList>
            <consortium name="CAUSES Study"/>
            <consortium name="EPGEN Study"/>
            <person name="Lehman A."/>
            <person name="Thouta S."/>
            <person name="Mancini G.M.S."/>
            <person name="Naidu S."/>
            <person name="van Slegtenhorst M."/>
            <person name="McWalter K."/>
            <person name="Person R."/>
            <person name="Mwenifumbo J."/>
            <person name="Salvarinova R."/>
            <person name="Guella I."/>
            <person name="McKenzie M.B."/>
            <person name="Datta A."/>
            <person name="Connolly M.B."/>
            <person name="Kalkhoran S.M."/>
            <person name="Poburko D."/>
            <person name="Friedman J.M."/>
            <person name="Farrer M.J."/>
            <person name="Demos M."/>
            <person name="Desai S."/>
            <person name="Claydon T."/>
        </authorList>
    </citation>
    <scope>INVOLVEMENT IN MRD46</scope>
    <scope>VARIANTS MRD46 GLY-145; ILE-341; ARG-369 AND ILE-429</scope>
    <scope>CHARACTERIZATION OF VARIANTS MRD46 GLY-145; ILE-341; ARG-369 AND ILE-429</scope>
    <scope>FUNCTION</scope>
</reference>
<protein>
    <recommendedName>
        <fullName>Potassium voltage-gated channel subfamily KQT member 5</fullName>
    </recommendedName>
    <alternativeName>
        <fullName>KQT-like 5</fullName>
    </alternativeName>
    <alternativeName>
        <fullName>Potassium channel subunit alpha KvLQT5</fullName>
    </alternativeName>
    <alternativeName>
        <fullName>Voltage-gated potassium channel subunit Kv7.5</fullName>
    </alternativeName>
</protein>
<proteinExistence type="evidence at protein level"/>
<comment type="function">
    <text evidence="7 8 9 11 12">Pore-forming subunit of the voltage-gated potassium (Kv) channel broadly expressed in brain and involved in the regulation of neuronal excitability (PubMed:10787416, PubMed:10816588, PubMed:11159685, PubMed:28669405). Associates with KCNQ3/Kv7.3 pore-forming subunit to form a potassium channel which contributes to M-type current, a slowly activating and deactivating potassium conductance which plays a critical role in determining the subthreshold electrical excitability of neurons (PubMed:10816588, PubMed:11159685). Contributes, with other potassium channels, to the molecular diversity of a heterogeneous population of M-channels, varying in kinetic and pharmacological properties, which underlie this physiologically important current (PubMed:10816588). Also forms a functional channel with KCNQ1/Kv7.1 subunit that may contribute to vasoconstriction and hypertension (PubMed:24855057). Channel may be selectively permeable in vitro to other cations besides potassium, in decreasing order of affinity K(+) = Rb(+) &gt; Cs(+) &gt; Na(+) (PubMed:10816588). Similar to the native M-channel, KCNQ3-KCNQ5 potassium channel is suppressed by activation of the muscarinic acetylcholine receptor CHRM1 (PubMed:10816588).</text>
</comment>
<comment type="catalytic activity">
    <reaction evidence="7">
        <text>K(+)(in) = K(+)(out)</text>
        <dbReference type="Rhea" id="RHEA:29463"/>
        <dbReference type="ChEBI" id="CHEBI:29103"/>
    </reaction>
</comment>
<comment type="activity regulation">
    <text evidence="3 7 8 9 13">Phosphatidylinositol-4,5-bisphosphate (PIP2) is essential to activate KCNQ5 channel by inducing the coupling of the voltage-sensing domain (VSD) and the pore-forming domain (PD) (By similarity). Calcium suppresses KCNQ5 channel current through calcium-bound CALM C-terminus (PubMed:29429937). Therefore CALM acts as calcium sensor that controls channel activity (PubMed:29429937). Activated by niflumic acid and the anticonvulsant retigabine (PubMed:10816588, PubMed:11159685). Inhibited by barium, linopirdine, XE991 and tetraethylammonium (as homomer) (PubMed:10787416, PubMed:10816588, PubMed:11159685). Insensitive to tetraethylammonium in KCNQ3-KCNQ5 heteromers (PubMed:10787416, PubMed:10816588).</text>
</comment>
<comment type="subunit">
    <text evidence="7 8 9 11 13">Homotetramer; forms a functional homotetrameric channel resulting in the expression of a small M-current (PubMed:10816588, PubMed:29429937). Heterotetramer with KCNQ3; forms heterotetrameric M-channel responsible for the native M-current (PubMed:10787416, PubMed:10816588, PubMed:11159685). Heterotetramer with KCNQ1; forms a functional voltage-gated potassium channel (PubMed:24855057). Interacts (via C-terminus) with calmodulin/CALM1; forms a heterooctameric structure (with 4:4 KCNQ1:CALM stoichiometry); the interaction is calcium-independent, constitutive and participates in the channel function (PubMed:29429937).</text>
</comment>
<comment type="subcellular location">
    <subcellularLocation>
        <location evidence="7 9">Cell membrane</location>
        <topology evidence="5">Multi-pass membrane protein</topology>
    </subcellularLocation>
</comment>
<comment type="alternative products">
    <event type="alternative splicing"/>
    <isoform>
        <id>Q9NR82-1</id>
        <name>1</name>
        <sequence type="displayed"/>
    </isoform>
    <isoform>
        <id>Q9NR82-2</id>
        <name>2</name>
        <sequence type="described" ref="VSP_001014"/>
    </isoform>
    <isoform>
        <id>Q9NR82-3</id>
        <name>3</name>
        <sequence type="described" ref="VSP_001015"/>
    </isoform>
    <isoform>
        <id>Q9NR82-4</id>
        <name>4</name>
        <sequence type="described" ref="VSP_022318 VSP_022319"/>
    </isoform>
    <isoform>
        <id>Q9NR82-5</id>
        <name>5</name>
        <sequence type="described" ref="VSP_045487"/>
    </isoform>
    <isoform>
        <id>Q9NR82-6</id>
        <name>6</name>
        <sequence type="described" ref="VSP_056731"/>
    </isoform>
    <isoform>
        <id>Q9NR82-7</id>
        <name>7</name>
        <sequence type="described" ref="VSP_056730"/>
    </isoform>
</comment>
<comment type="tissue specificity">
    <text evidence="7 8">Strongly expressed in brain and skeletal muscle (PubMed:10787416, PubMed:10816588). In brain, expressed in cerebral cortex, occipital pole, frontal lobe and temporal lobe. Lower levels in hippocampus and putamen. Low to undetectable levels in medulla, cerebellum and thalamus (PubMed:10787416, PubMed:10816588).</text>
</comment>
<comment type="domain">
    <text evidence="3">Each channel subunit contains six transmembrane segments (S1-S6) with S1-S4 forming one voltage sensing domain (VSD) and S5-S6 contributing to form one quarter of an interlocking pore-forming domain (PD).</text>
</comment>
<comment type="domain">
    <text evidence="13">The CALM binding domains correspond to the first two membrane-proximal helical regions that interact with a single calmodulin/CALM molecule forming a clamp-like structure and are essential for channel trafficking and electrophysiological activity (PubMed:29429937). CALM N-terminus binds to the second helix in both calcium-free and calcium-bound forms and regulates channel trafficking. CALM C-terminus binds to the first helice in calcium-free form; this interaction is disrupted by calcium binding which regulates channel electrophysiological activity (PubMed:29429937).</text>
</comment>
<comment type="domain">
    <text evidence="2">The C-terminal assembly domain carries the major determinants of tetramerization and subunit assembly specificity. Its coiled-coil region is four-stranded.</text>
</comment>
<comment type="disease" evidence="12">
    <disease id="DI-05062">
        <name>Intellectual developmental disorder, autosomal dominant 46</name>
        <acronym>MRD46</acronym>
        <description>A disorder characterized by significantly below average general intellectual functioning associated with impairments in adaptive behavior and manifested during the developmental period. MRD46 patients manifest developmental delay and mild to moderate intellectual disability.</description>
        <dbReference type="MIM" id="617601"/>
    </disease>
    <text>The disease is caused by variants affecting the gene represented in this entry.</text>
</comment>
<comment type="similarity">
    <text evidence="17">Belongs to the potassium channel family. KQT (TC 1.A.1.15) subfamily. Kv7.5/KCNQ5 sub-subfamily.</text>
</comment>
<comment type="sequence caution" evidence="17">
    <conflict type="erroneous initiation">
        <sequence resource="EMBL-CDS" id="BAG61495"/>
    </conflict>
    <text>Truncated N-terminus.</text>
</comment>
<accession>Q9NR82</accession>
<accession>A6NKT6</accession>
<accession>A6PVT6</accession>
<accession>A8MSQ5</accession>
<accession>B4DS33</accession>
<accession>B5MC83</accession>
<accession>B7ZL37</accession>
<accession>F5GZV0</accession>
<accession>Q17RE1</accession>
<accession>Q5VVP3</accession>
<accession>Q86W40</accession>
<accession>Q9NRN0</accession>
<accession>Q9NYA6</accession>
<gene>
    <name evidence="18" type="primary">KCNQ5</name>
</gene>
<feature type="chain" id="PRO_0000054040" description="Potassium voltage-gated channel subfamily KQT member 5">
    <location>
        <begin position="1"/>
        <end position="932"/>
    </location>
</feature>
<feature type="topological domain" description="Cytoplasmic" evidence="5">
    <location>
        <begin position="1"/>
        <end position="125"/>
    </location>
</feature>
<feature type="transmembrane region" description="Helical; Name=Segment S1" evidence="5">
    <location>
        <begin position="126"/>
        <end position="146"/>
    </location>
</feature>
<feature type="topological domain" description="Extracellular" evidence="5">
    <location>
        <begin position="147"/>
        <end position="156"/>
    </location>
</feature>
<feature type="transmembrane region" description="Helical; Name=Segment S2" evidence="5">
    <location>
        <begin position="157"/>
        <end position="177"/>
    </location>
</feature>
<feature type="topological domain" description="Cytoplasmic" evidence="5">
    <location>
        <begin position="178"/>
        <end position="200"/>
    </location>
</feature>
<feature type="transmembrane region" description="Helical; Name=Segment S3" evidence="5">
    <location>
        <begin position="201"/>
        <end position="221"/>
    </location>
</feature>
<feature type="topological domain" description="Extracellular" evidence="5">
    <location>
        <begin position="222"/>
        <end position="229"/>
    </location>
</feature>
<feature type="transmembrane region" description="Helical; Voltage-sensor; Name=Segment S4" evidence="5">
    <location>
        <begin position="230"/>
        <end position="252"/>
    </location>
</feature>
<feature type="topological domain" description="Cytoplasmic" evidence="5">
    <location>
        <begin position="253"/>
        <end position="266"/>
    </location>
</feature>
<feature type="transmembrane region" description="Helical; Name=Segment S5" evidence="5">
    <location>
        <begin position="267"/>
        <end position="287"/>
    </location>
</feature>
<feature type="topological domain" description="Extracellular" evidence="5">
    <location>
        <begin position="288"/>
        <end position="298"/>
    </location>
</feature>
<feature type="intramembrane region" description="Pore-forming; Name=Segment H5" evidence="5">
    <location>
        <begin position="299"/>
        <end position="319"/>
    </location>
</feature>
<feature type="topological domain" description="Extracellular" evidence="5">
    <location>
        <begin position="320"/>
        <end position="325"/>
    </location>
</feature>
<feature type="transmembrane region" description="Helical; Name=Segment S6" evidence="5">
    <location>
        <begin position="326"/>
        <end position="346"/>
    </location>
</feature>
<feature type="topological domain" description="Cytoplasmic" evidence="5">
    <location>
        <begin position="347"/>
        <end position="932"/>
    </location>
</feature>
<feature type="region of interest" description="Interaction with CALM" evidence="13">
    <location>
        <begin position="370"/>
        <end position="378"/>
    </location>
</feature>
<feature type="region of interest" description="Disordered" evidence="6">
    <location>
        <begin position="404"/>
        <end position="465"/>
    </location>
</feature>
<feature type="region of interest" description="Interaction with CALM" evidence="13">
    <location>
        <begin position="521"/>
        <end position="528"/>
    </location>
</feature>
<feature type="region of interest" description="Disordered" evidence="6">
    <location>
        <begin position="655"/>
        <end position="678"/>
    </location>
</feature>
<feature type="region of interest" description="Disordered" evidence="6">
    <location>
        <begin position="876"/>
        <end position="919"/>
    </location>
</feature>
<feature type="compositionally biased region" description="Polar residues" evidence="6">
    <location>
        <begin position="431"/>
        <end position="440"/>
    </location>
</feature>
<feature type="compositionally biased region" description="Acidic residues" evidence="6">
    <location>
        <begin position="876"/>
        <end position="885"/>
    </location>
</feature>
<feature type="compositionally biased region" description="Low complexity" evidence="6">
    <location>
        <begin position="888"/>
        <end position="899"/>
    </location>
</feature>
<feature type="compositionally biased region" description="Polar residues" evidence="6">
    <location>
        <begin position="902"/>
        <end position="914"/>
    </location>
</feature>
<feature type="binding site" evidence="1">
    <location>
        <position position="248"/>
    </location>
    <ligand>
        <name>a 1,2-diacyl-sn-glycero-3-phospho-(1D-myo-inositol-4,5-bisphosphate)</name>
        <dbReference type="ChEBI" id="CHEBI:58456"/>
    </ligand>
</feature>
<feature type="binding site" evidence="1">
    <location>
        <position position="264"/>
    </location>
    <ligand>
        <name>a 1,2-diacyl-sn-glycero-3-phospho-(1D-myo-inositol-4,5-bisphosphate)</name>
        <dbReference type="ChEBI" id="CHEBI:58456"/>
    </ligand>
</feature>
<feature type="binding site" evidence="1">
    <location>
        <position position="361"/>
    </location>
    <ligand>
        <name>a 1,2-diacyl-sn-glycero-3-phospho-(1D-myo-inositol-4,5-bisphosphate)</name>
        <dbReference type="ChEBI" id="CHEBI:58456"/>
    </ligand>
</feature>
<feature type="modified residue" description="Phosphoserine" evidence="4">
    <location>
        <position position="88"/>
    </location>
</feature>
<feature type="modified residue" description="Phosphoserine" evidence="4">
    <location>
        <position position="447"/>
    </location>
</feature>
<feature type="modified residue" description="Phosphoserine" evidence="19">
    <location>
        <position position="831"/>
    </location>
</feature>
<feature type="splice variant" id="VSP_001014" description="In isoform 2." evidence="14 16">
    <original>KKEQGEASSS</original>
    <variation>N</variation>
    <location>
        <begin position="407"/>
        <end position="416"/>
    </location>
</feature>
<feature type="splice variant" id="VSP_001015" description="In isoform 3." evidence="14">
    <original>KKEQGEASSS</original>
    <variation>NKFCSNKQKLFRMYTSRKQS</variation>
    <location>
        <begin position="407"/>
        <end position="416"/>
    </location>
</feature>
<feature type="splice variant" id="VSP_056730" description="In isoform 7." evidence="17">
    <original>KEQGEASSS</original>
    <variation>QNQQGESQSC</variation>
    <location>
        <begin position="408"/>
        <end position="416"/>
    </location>
</feature>
<feature type="splice variant" id="VSP_045487" description="In isoform 5." evidence="15">
    <location>
        <begin position="416"/>
        <end position="525"/>
    </location>
</feature>
<feature type="splice variant" id="VSP_022318" description="In isoform 4." evidence="16">
    <original>SQKLSFKERVRM</original>
    <variation>RFVISLLLHVCL</variation>
    <location>
        <begin position="416"/>
        <end position="427"/>
    </location>
</feature>
<feature type="splice variant" id="VSP_056731" description="In isoform 6." evidence="17">
    <original>S</original>
    <variation>SKFCSNKQKLFRMYTSRKQS</variation>
    <location>
        <position position="416"/>
    </location>
</feature>
<feature type="splice variant" id="VSP_022319" description="In isoform 4." evidence="16">
    <location>
        <begin position="428"/>
        <end position="932"/>
    </location>
</feature>
<feature type="sequence variant" id="VAR_079219" description="In MRD46; decreased protein abundance; decreased potassium ion transmembrane transport; changed voltage-gated potassium channel activity; changed gating properties; dbSNP:rs1135401955." evidence="12">
    <original>V</original>
    <variation>G</variation>
    <location>
        <position position="145"/>
    </location>
</feature>
<feature type="sequence variant" id="VAR_035772" description="In a colorectal cancer sample; somatic mutation." evidence="10">
    <original>W</original>
    <variation>G</variation>
    <location>
        <position position="191"/>
    </location>
</feature>
<feature type="sequence variant" id="VAR_035773" description="In a colorectal cancer sample; somatic mutation; dbSNP:rs1314919218." evidence="10">
    <original>R</original>
    <variation>C</variation>
    <location>
        <position position="244"/>
    </location>
</feature>
<feature type="sequence variant" id="VAR_079220" description="In MRD46; decreased protein abundance; decreased potassium ion transmembrane transport; changed voltage-gated potassium channel activity; changed gating properties; dbSNP:rs1135401956." evidence="12">
    <original>L</original>
    <variation>I</variation>
    <location>
        <position position="341"/>
    </location>
</feature>
<feature type="sequence variant" id="VAR_079221" description="In MRD46; no effect on protein abundance; no effect on potassium ion transmembrane transport; increased voltage-gated potassium channel activity; changed gating properties resulting in a gain of function; dbSNP:rs1135401958." evidence="12">
    <original>P</original>
    <variation>R</variation>
    <location>
        <position position="369"/>
    </location>
</feature>
<feature type="sequence variant" id="VAR_079222" description="In MRD46; no effect on protein abundance; no effect on potassium ion transmembrane transport; changed voltage-gated potassium channel activity; changed gating properties; dbSNP:rs1135401957." evidence="12">
    <original>S</original>
    <variation>I</variation>
    <location>
        <position position="429"/>
    </location>
</feature>
<feature type="sequence conflict" description="In Ref. 1; AAF91335." evidence="17" ref="1">
    <original>KP</original>
    <variation>SR</variation>
    <location>
        <begin position="92"/>
        <end position="93"/>
    </location>
</feature>
<feature type="sequence conflict" description="In Ref. 4; BAG61495." evidence="17" ref="4">
    <original>R</original>
    <variation>Q</variation>
    <location>
        <position position="109"/>
    </location>
</feature>
<feature type="sequence conflict" description="In Ref. 7; AAF73446." evidence="17" ref="7">
    <original>Y</original>
    <variation>H</variation>
    <location>
        <position position="129"/>
    </location>
</feature>
<feature type="sequence conflict" description="In Ref. 7; AAF73446." evidence="17" ref="7">
    <original>A</original>
    <variation>V</variation>
    <location>
        <position position="727"/>
    </location>
</feature>
<feature type="sequence conflict" description="In Ref. 7; AAF73446." evidence="17" ref="7">
    <original>T</original>
    <variation>P</variation>
    <location>
        <position position="799"/>
    </location>
</feature>
<feature type="sequence conflict" description="In Ref. 7; AAF73446." evidence="17" ref="7">
    <original>S</original>
    <variation>R</variation>
    <location>
        <position position="857"/>
    </location>
</feature>
<feature type="sequence conflict" description="In Ref. 7; AAF73446." evidence="17" ref="7">
    <original>R</original>
    <variation>Q</variation>
    <location>
        <position position="909"/>
    </location>
</feature>
<feature type="helix" evidence="20">
    <location>
        <begin position="367"/>
        <end position="382"/>
    </location>
</feature>
<feature type="helix" evidence="20">
    <location>
        <begin position="405"/>
        <end position="422"/>
    </location>
</feature>
<feature type="helix" evidence="20">
    <location>
        <begin position="531"/>
        <end position="535"/>
    </location>
</feature>
<evidence type="ECO:0000250" key="1">
    <source>
        <dbReference type="UniProtKB" id="O43526"/>
    </source>
</evidence>
<evidence type="ECO:0000250" key="2">
    <source>
        <dbReference type="UniProtKB" id="P56696"/>
    </source>
</evidence>
<evidence type="ECO:0000250" key="3">
    <source>
        <dbReference type="UniProtKB" id="Q92508"/>
    </source>
</evidence>
<evidence type="ECO:0000250" key="4">
    <source>
        <dbReference type="UniProtKB" id="Q9JK45"/>
    </source>
</evidence>
<evidence type="ECO:0000255" key="5"/>
<evidence type="ECO:0000256" key="6">
    <source>
        <dbReference type="SAM" id="MobiDB-lite"/>
    </source>
</evidence>
<evidence type="ECO:0000269" key="7">
    <source>
    </source>
</evidence>
<evidence type="ECO:0000269" key="8">
    <source>
    </source>
</evidence>
<evidence type="ECO:0000269" key="9">
    <source>
    </source>
</evidence>
<evidence type="ECO:0000269" key="10">
    <source>
    </source>
</evidence>
<evidence type="ECO:0000269" key="11">
    <source>
    </source>
</evidence>
<evidence type="ECO:0000269" key="12">
    <source>
    </source>
</evidence>
<evidence type="ECO:0000269" key="13">
    <source>
    </source>
</evidence>
<evidence type="ECO:0000303" key="14">
    <source>
    </source>
</evidence>
<evidence type="ECO:0000303" key="15">
    <source>
    </source>
</evidence>
<evidence type="ECO:0000303" key="16">
    <source>
    </source>
</evidence>
<evidence type="ECO:0000305" key="17"/>
<evidence type="ECO:0000312" key="18">
    <source>
        <dbReference type="HGNC" id="HGNC:6299"/>
    </source>
</evidence>
<evidence type="ECO:0007744" key="19">
    <source>
    </source>
</evidence>
<evidence type="ECO:0007829" key="20">
    <source>
        <dbReference type="PDB" id="6B8Q"/>
    </source>
</evidence>
<keyword id="KW-0002">3D-structure</keyword>
<keyword id="KW-0025">Alternative splicing</keyword>
<keyword id="KW-1003">Cell membrane</keyword>
<keyword id="KW-0225">Disease variant</keyword>
<keyword id="KW-0991">Intellectual disability</keyword>
<keyword id="KW-0407">Ion channel</keyword>
<keyword id="KW-0406">Ion transport</keyword>
<keyword id="KW-0472">Membrane</keyword>
<keyword id="KW-0597">Phosphoprotein</keyword>
<keyword id="KW-0630">Potassium</keyword>
<keyword id="KW-0631">Potassium channel</keyword>
<keyword id="KW-0633">Potassium transport</keyword>
<keyword id="KW-1267">Proteomics identification</keyword>
<keyword id="KW-1185">Reference proteome</keyword>
<keyword id="KW-0812">Transmembrane</keyword>
<keyword id="KW-1133">Transmembrane helix</keyword>
<keyword id="KW-0813">Transport</keyword>
<keyword id="KW-0851">Voltage-gated channel</keyword>
<name>KCNQ5_HUMAN</name>